<proteinExistence type="evidence at protein level"/>
<feature type="transit peptide" description="Mitochondrion" evidence="1">
    <location>
        <begin position="1"/>
        <end position="27"/>
    </location>
</feature>
<feature type="chain" id="PRO_0000238656" description="MIOREX complex component 4">
    <location>
        <begin position="28"/>
        <end position="430"/>
    </location>
</feature>
<feature type="transmembrane region" description="Helical" evidence="1">
    <location>
        <begin position="403"/>
        <end position="420"/>
    </location>
</feature>
<comment type="function">
    <text evidence="4">Component of MIOREX complexes, large expressome-like assemblies of ribosomes with factors involved in all the steps of post-transcriptional gene expression.</text>
</comment>
<comment type="subunit">
    <text evidence="4">Associates with the mitochondrial ribosome.</text>
</comment>
<comment type="subcellular location">
    <subcellularLocation>
        <location evidence="2">Mitochondrion</location>
    </subcellularLocation>
    <subcellularLocation>
        <location evidence="6">Mitochondrion membrane</location>
        <topology evidence="1">Single-pass membrane protein</topology>
    </subcellularLocation>
</comment>
<comment type="induction">
    <text evidence="3">During M phase of cell cycle.</text>
</comment>
<accession>Q12467</accession>
<accession>D6W3K0</accession>
<evidence type="ECO:0000255" key="1"/>
<evidence type="ECO:0000269" key="2">
    <source>
    </source>
</evidence>
<evidence type="ECO:0000269" key="3">
    <source>
    </source>
</evidence>
<evidence type="ECO:0000269" key="4">
    <source>
    </source>
</evidence>
<evidence type="ECO:0000303" key="5">
    <source>
    </source>
</evidence>
<evidence type="ECO:0000305" key="6"/>
<evidence type="ECO:0000305" key="7">
    <source>
    </source>
</evidence>
<evidence type="ECO:0000312" key="8">
    <source>
        <dbReference type="SGD" id="S000006089"/>
    </source>
</evidence>
<reference key="1">
    <citation type="journal article" date="1996" name="Yeast">
        <title>The sequence of 55 kb on the left arm of yeast chromosome XVI identifies a small nuclear RNA, a new putative protein kinase and two new putative regulators.</title>
        <authorList>
            <person name="Purnelle B."/>
            <person name="Coster F."/>
            <person name="Goffeau A."/>
        </authorList>
    </citation>
    <scope>NUCLEOTIDE SEQUENCE [GENOMIC DNA]</scope>
    <source>
        <strain>ATCC 204511 / S288c / AB972</strain>
    </source>
</reference>
<reference key="2">
    <citation type="journal article" date="1997" name="Nature">
        <title>The nucleotide sequence of Saccharomyces cerevisiae chromosome XVI.</title>
        <authorList>
            <person name="Bussey H."/>
            <person name="Storms R.K."/>
            <person name="Ahmed A."/>
            <person name="Albermann K."/>
            <person name="Allen E."/>
            <person name="Ansorge W."/>
            <person name="Araujo R."/>
            <person name="Aparicio A."/>
            <person name="Barrell B.G."/>
            <person name="Badcock K."/>
            <person name="Benes V."/>
            <person name="Botstein D."/>
            <person name="Bowman S."/>
            <person name="Brueckner M."/>
            <person name="Carpenter J."/>
            <person name="Cherry J.M."/>
            <person name="Chung E."/>
            <person name="Churcher C.M."/>
            <person name="Coster F."/>
            <person name="Davis K."/>
            <person name="Davis R.W."/>
            <person name="Dietrich F.S."/>
            <person name="Delius H."/>
            <person name="DiPaolo T."/>
            <person name="Dubois E."/>
            <person name="Duesterhoeft A."/>
            <person name="Duncan M."/>
            <person name="Floeth M."/>
            <person name="Fortin N."/>
            <person name="Friesen J.D."/>
            <person name="Fritz C."/>
            <person name="Goffeau A."/>
            <person name="Hall J."/>
            <person name="Hebling U."/>
            <person name="Heumann K."/>
            <person name="Hilbert H."/>
            <person name="Hillier L.W."/>
            <person name="Hunicke-Smith S."/>
            <person name="Hyman R.W."/>
            <person name="Johnston M."/>
            <person name="Kalman S."/>
            <person name="Kleine K."/>
            <person name="Komp C."/>
            <person name="Kurdi O."/>
            <person name="Lashkari D."/>
            <person name="Lew H."/>
            <person name="Lin A."/>
            <person name="Lin D."/>
            <person name="Louis E.J."/>
            <person name="Marathe R."/>
            <person name="Messenguy F."/>
            <person name="Mewes H.-W."/>
            <person name="Mirtipati S."/>
            <person name="Moestl D."/>
            <person name="Mueller-Auer S."/>
            <person name="Namath A."/>
            <person name="Nentwich U."/>
            <person name="Oefner P."/>
            <person name="Pearson D."/>
            <person name="Petel F.X."/>
            <person name="Pohl T.M."/>
            <person name="Purnelle B."/>
            <person name="Rajandream M.A."/>
            <person name="Rechmann S."/>
            <person name="Rieger M."/>
            <person name="Riles L."/>
            <person name="Roberts D."/>
            <person name="Schaefer M."/>
            <person name="Scharfe M."/>
            <person name="Scherens B."/>
            <person name="Schramm S."/>
            <person name="Schroeder M."/>
            <person name="Sdicu A.-M."/>
            <person name="Tettelin H."/>
            <person name="Urrestarazu L.A."/>
            <person name="Ushinsky S."/>
            <person name="Vierendeels F."/>
            <person name="Vissers S."/>
            <person name="Voss H."/>
            <person name="Walsh S.V."/>
            <person name="Wambutt R."/>
            <person name="Wang Y."/>
            <person name="Wedler E."/>
            <person name="Wedler H."/>
            <person name="Winnett E."/>
            <person name="Zhong W.-W."/>
            <person name="Zollner A."/>
            <person name="Vo D.H."/>
            <person name="Hani J."/>
        </authorList>
    </citation>
    <scope>NUCLEOTIDE SEQUENCE [LARGE SCALE GENOMIC DNA]</scope>
    <source>
        <strain>ATCC 204508 / S288c</strain>
    </source>
</reference>
<reference key="3">
    <citation type="journal article" date="2014" name="G3 (Bethesda)">
        <title>The reference genome sequence of Saccharomyces cerevisiae: Then and now.</title>
        <authorList>
            <person name="Engel S.R."/>
            <person name="Dietrich F.S."/>
            <person name="Fisk D.G."/>
            <person name="Binkley G."/>
            <person name="Balakrishnan R."/>
            <person name="Costanzo M.C."/>
            <person name="Dwight S.S."/>
            <person name="Hitz B.C."/>
            <person name="Karra K."/>
            <person name="Nash R.S."/>
            <person name="Weng S."/>
            <person name="Wong E.D."/>
            <person name="Lloyd P."/>
            <person name="Skrzypek M.S."/>
            <person name="Miyasato S.R."/>
            <person name="Simison M."/>
            <person name="Cherry J.M."/>
        </authorList>
    </citation>
    <scope>GENOME REANNOTATION</scope>
    <source>
        <strain>ATCC 204508 / S288c</strain>
    </source>
</reference>
<reference key="4">
    <citation type="journal article" date="2003" name="Nature">
        <title>Global analysis of protein localization in budding yeast.</title>
        <authorList>
            <person name="Huh W.-K."/>
            <person name="Falvo J.V."/>
            <person name="Gerke L.C."/>
            <person name="Carroll A.S."/>
            <person name="Howson R.W."/>
            <person name="Weissman J.S."/>
            <person name="O'Shea E.K."/>
        </authorList>
    </citation>
    <scope>SUBCELLULAR LOCATION [LARGE SCALE ANALYSIS]</scope>
</reference>
<reference key="5">
    <citation type="journal article" date="2005" name="Yeast">
        <title>New weakly expressed cell cycle-regulated genes in yeast.</title>
        <authorList>
            <person name="de Lichtenberg U."/>
            <person name="Wernersson R."/>
            <person name="Jensen T.S."/>
            <person name="Nielsen H.B."/>
            <person name="Fausboell A."/>
            <person name="Schmidt P."/>
            <person name="Hansen F.B."/>
            <person name="Knudsen S."/>
            <person name="Brunak S."/>
        </authorList>
    </citation>
    <scope>INDUCTION</scope>
</reference>
<reference key="6">
    <citation type="journal article" date="2015" name="Cell Rep.">
        <title>Organization of mitochondrial gene expression in two distinct ribosome-containing assemblies.</title>
        <authorList>
            <person name="Kehrein K."/>
            <person name="Schilling R."/>
            <person name="Moller-Hergt B.V."/>
            <person name="Wurm C.A."/>
            <person name="Jakobs S."/>
            <person name="Lamkemeyer T."/>
            <person name="Langer T."/>
            <person name="Ott M."/>
        </authorList>
    </citation>
    <scope>FUNCTION</scope>
    <scope>SUBUNIT</scope>
</reference>
<organism>
    <name type="scientific">Saccharomyces cerevisiae (strain ATCC 204508 / S288c)</name>
    <name type="common">Baker's yeast</name>
    <dbReference type="NCBI Taxonomy" id="559292"/>
    <lineage>
        <taxon>Eukaryota</taxon>
        <taxon>Fungi</taxon>
        <taxon>Dikarya</taxon>
        <taxon>Ascomycota</taxon>
        <taxon>Saccharomycotina</taxon>
        <taxon>Saccharomycetes</taxon>
        <taxon>Saccharomycetales</taxon>
        <taxon>Saccharomycetaceae</taxon>
        <taxon>Saccharomyces</taxon>
    </lineage>
</organism>
<name>MRX4_YEAST</name>
<protein>
    <recommendedName>
        <fullName evidence="7">MIOREX complex component 4</fullName>
    </recommendedName>
    <alternativeName>
        <fullName evidence="5">Mitochondrial organization of gene expression protein 4</fullName>
    </alternativeName>
</protein>
<dbReference type="EMBL" id="X96770">
    <property type="protein sequence ID" value="CAA65553.1"/>
    <property type="molecule type" value="Genomic_DNA"/>
</dbReference>
<dbReference type="EMBL" id="Z73524">
    <property type="protein sequence ID" value="CAA97874.1"/>
    <property type="molecule type" value="Genomic_DNA"/>
</dbReference>
<dbReference type="EMBL" id="BK006949">
    <property type="protein sequence ID" value="DAA11266.1"/>
    <property type="molecule type" value="Genomic_DNA"/>
</dbReference>
<dbReference type="PIR" id="S65179">
    <property type="entry name" value="S65179"/>
</dbReference>
<dbReference type="RefSeq" id="NP_015157.1">
    <property type="nucleotide sequence ID" value="NM_001183982.1"/>
</dbReference>
<dbReference type="BioGRID" id="36015">
    <property type="interactions" value="104"/>
</dbReference>
<dbReference type="FunCoup" id="Q12467">
    <property type="interactions" value="46"/>
</dbReference>
<dbReference type="IntAct" id="Q12467">
    <property type="interactions" value="2"/>
</dbReference>
<dbReference type="STRING" id="4932.YPL168W"/>
<dbReference type="iPTMnet" id="Q12467"/>
<dbReference type="PaxDb" id="4932-YPL168W"/>
<dbReference type="PeptideAtlas" id="Q12467"/>
<dbReference type="EnsemblFungi" id="YPL168W_mRNA">
    <property type="protein sequence ID" value="YPL168W"/>
    <property type="gene ID" value="YPL168W"/>
</dbReference>
<dbReference type="GeneID" id="855935"/>
<dbReference type="KEGG" id="sce:YPL168W"/>
<dbReference type="AGR" id="SGD:S000006089"/>
<dbReference type="SGD" id="S000006089">
    <property type="gene designation" value="MRX4"/>
</dbReference>
<dbReference type="VEuPathDB" id="FungiDB:YPL168W"/>
<dbReference type="eggNOG" id="ENOG502S553">
    <property type="taxonomic scope" value="Eukaryota"/>
</dbReference>
<dbReference type="HOGENOM" id="CLU_674708_0_0_1"/>
<dbReference type="InParanoid" id="Q12467"/>
<dbReference type="OMA" id="CNDEEVY"/>
<dbReference type="OrthoDB" id="4035871at2759"/>
<dbReference type="BioCyc" id="YEAST:G3O-34064-MONOMER"/>
<dbReference type="BioGRID-ORCS" id="855935">
    <property type="hits" value="5 hits in 10 CRISPR screens"/>
</dbReference>
<dbReference type="PRO" id="PR:Q12467"/>
<dbReference type="Proteomes" id="UP000002311">
    <property type="component" value="Chromosome XVI"/>
</dbReference>
<dbReference type="RNAct" id="Q12467">
    <property type="molecule type" value="protein"/>
</dbReference>
<dbReference type="GO" id="GO:0031966">
    <property type="term" value="C:mitochondrial membrane"/>
    <property type="evidence" value="ECO:0007669"/>
    <property type="project" value="UniProtKB-SubCell"/>
</dbReference>
<dbReference type="GO" id="GO:0005739">
    <property type="term" value="C:mitochondrion"/>
    <property type="evidence" value="ECO:0007005"/>
    <property type="project" value="SGD"/>
</dbReference>
<sequence length="430" mass="48827">MTVLYTSASLKKMKCLAFNMGMNCVRTVSHARSGGAKFGGRNVFNIFDSKTPDSVRIKAFKNTIYQSAMGKGKTKFSAMEINLITSLVRGYKGEGKKNAINPLQTNVQILNKLLLTHRLTDKDILEGMNLAAGPVNVAIPRDITPQEEKKKVELRNRKAENMDLHPSRKMHIKELLHSLNLDMCNDEEVYQKISLYLQKNEESRTSVGASQQNHVDIDINSLKRYLQNIEKKARQKSAIDKQKKNQARIYQWNTQSFSEIVPLSAGNILFKREPNRLWKRLQNGISVFLGSNGGGKKSKTTKKVLQGNNILLHSLENNKDMTLSNNFDHSVFNINFTDLFGVINASGSPPDRVLNEINEIELKGWKCVGNLYDNNKIVVFQSSNPLLEDTKIPQKSFTNSKRFLISLSALLASFFAYYRYRLSQRQESKK</sequence>
<gene>
    <name evidence="5" type="primary">MRX4</name>
    <name evidence="8" type="ordered locus">YPL168W</name>
</gene>
<keyword id="KW-0472">Membrane</keyword>
<keyword id="KW-0496">Mitochondrion</keyword>
<keyword id="KW-1185">Reference proteome</keyword>
<keyword id="KW-0809">Transit peptide</keyword>
<keyword id="KW-0812">Transmembrane</keyword>
<keyword id="KW-1133">Transmembrane helix</keyword>